<gene>
    <name type="primary">APOOL</name>
    <name type="synonym">FAM121A</name>
    <name type="synonym">MIC27</name>
</gene>
<proteinExistence type="evidence at transcript level"/>
<accession>Q5NVS6</accession>
<name>MIC27_PONAB</name>
<protein>
    <recommendedName>
        <fullName>MICOS complex subunit MIC27</fullName>
    </recommendedName>
    <alternativeName>
        <fullName>Apolipoprotein O-like</fullName>
    </alternativeName>
    <alternativeName>
        <fullName>Protein FAM121A</fullName>
    </alternativeName>
</protein>
<feature type="transit peptide" description="Mitochondrion" evidence="2">
    <location>
        <begin position="1"/>
        <end position="27"/>
    </location>
</feature>
<feature type="chain" id="PRO_0000042053" description="MICOS complex subunit MIC27">
    <location>
        <begin position="28"/>
        <end position="266"/>
    </location>
</feature>
<feature type="topological domain" description="Mitochondrial intermembrane" evidence="2">
    <location>
        <begin position="28"/>
        <end position="110"/>
    </location>
</feature>
<feature type="transmembrane region" description="Helical" evidence="2">
    <location>
        <begin position="111"/>
        <end position="129"/>
    </location>
</feature>
<feature type="topological domain" description="Mitochondrial matrix" evidence="2">
    <location>
        <begin position="130"/>
        <end position="137"/>
    </location>
</feature>
<feature type="transmembrane region" description="Helical" evidence="2">
    <location>
        <begin position="138"/>
        <end position="155"/>
    </location>
</feature>
<feature type="topological domain" description="Mitochondrial intermembrane" evidence="2">
    <location>
        <begin position="156"/>
        <end position="266"/>
    </location>
</feature>
<feature type="modified residue" description="Phosphoserine" evidence="1">
    <location>
        <position position="204"/>
    </location>
</feature>
<organism>
    <name type="scientific">Pongo abelii</name>
    <name type="common">Sumatran orangutan</name>
    <name type="synonym">Pongo pygmaeus abelii</name>
    <dbReference type="NCBI Taxonomy" id="9601"/>
    <lineage>
        <taxon>Eukaryota</taxon>
        <taxon>Metazoa</taxon>
        <taxon>Chordata</taxon>
        <taxon>Craniata</taxon>
        <taxon>Vertebrata</taxon>
        <taxon>Euteleostomi</taxon>
        <taxon>Mammalia</taxon>
        <taxon>Eutheria</taxon>
        <taxon>Euarchontoglires</taxon>
        <taxon>Primates</taxon>
        <taxon>Haplorrhini</taxon>
        <taxon>Catarrhini</taxon>
        <taxon>Hominidae</taxon>
        <taxon>Pongo</taxon>
    </lineage>
</organism>
<reference key="1">
    <citation type="submission" date="2004-11" db="EMBL/GenBank/DDBJ databases">
        <authorList>
            <consortium name="The German cDNA consortium"/>
        </authorList>
    </citation>
    <scope>NUCLEOTIDE SEQUENCE [LARGE SCALE MRNA]</scope>
    <source>
        <tissue>Brain cortex</tissue>
    </source>
</reference>
<sequence length="266" mass="28710">MAAIRMGKLTTMPAGLIYASVSVHAAKEEESKKQLVKPEQLPIYTAPPLQSKYVEEQPGHLQMGFASIRTATGCYIGWCKGVYVFVKNGIMDTVQFGKDAYVYMKNPPRDFLPKMGVITVSGLAGLVSARKGSKFKKITYPLGLATLGATVCYPVQSVIIAKVTAKKIYATSQQIFGAVKSLWTKSSKEESLPKPKEKTKLGSSSEIEVPAKTTHVLKHSVPLPTELSSEAKTKSESTSDVQISEVGGKIIGTWGPNVTNSGVLRI</sequence>
<evidence type="ECO:0000250" key="1">
    <source>
        <dbReference type="UniProtKB" id="Q6UXV4"/>
    </source>
</evidence>
<evidence type="ECO:0000255" key="2"/>
<evidence type="ECO:0000305" key="3"/>
<keyword id="KW-0472">Membrane</keyword>
<keyword id="KW-0496">Mitochondrion</keyword>
<keyword id="KW-0999">Mitochondrion inner membrane</keyword>
<keyword id="KW-0597">Phosphoprotein</keyword>
<keyword id="KW-1185">Reference proteome</keyword>
<keyword id="KW-0809">Transit peptide</keyword>
<keyword id="KW-0812">Transmembrane</keyword>
<keyword id="KW-1133">Transmembrane helix</keyword>
<dbReference type="EMBL" id="CR925925">
    <property type="protein sequence ID" value="CAI29587.1"/>
    <property type="molecule type" value="mRNA"/>
</dbReference>
<dbReference type="RefSeq" id="NP_001127062.1">
    <property type="nucleotide sequence ID" value="NM_001133590.1"/>
</dbReference>
<dbReference type="FunCoup" id="Q5NVS6">
    <property type="interactions" value="887"/>
</dbReference>
<dbReference type="STRING" id="9601.ENSPPYP00000022963"/>
<dbReference type="GeneID" id="100174091"/>
<dbReference type="KEGG" id="pon:100174091"/>
<dbReference type="CTD" id="139322"/>
<dbReference type="InParanoid" id="Q5NVS6"/>
<dbReference type="OrthoDB" id="5973346at2759"/>
<dbReference type="Proteomes" id="UP000001595">
    <property type="component" value="Unplaced"/>
</dbReference>
<dbReference type="GO" id="GO:0061617">
    <property type="term" value="C:MICOS complex"/>
    <property type="evidence" value="ECO:0007669"/>
    <property type="project" value="InterPro"/>
</dbReference>
<dbReference type="GO" id="GO:0042407">
    <property type="term" value="P:cristae formation"/>
    <property type="evidence" value="ECO:0007669"/>
    <property type="project" value="InterPro"/>
</dbReference>
<dbReference type="InterPro" id="IPR019166">
    <property type="entry name" value="MIC26/MIC27"/>
</dbReference>
<dbReference type="InterPro" id="IPR033182">
    <property type="entry name" value="MIC26/MIC27_animal"/>
</dbReference>
<dbReference type="PANTHER" id="PTHR14564">
    <property type="entry name" value="MICOS COMPLEX SUBUNIT MIC26 / MIC27 FAMILY MEMBER"/>
    <property type="match status" value="1"/>
</dbReference>
<dbReference type="Pfam" id="PF09769">
    <property type="entry name" value="ApoO"/>
    <property type="match status" value="1"/>
</dbReference>
<comment type="function">
    <text evidence="1">Component of the MICOS complex, a large protein complex of the mitochondrial inner membrane that plays crucial roles in the maintenance of crista junctions, inner membrane architecture, and formation of contact sites to the outer membrane. Specifically binds to cardiolipin (in vitro) but not to the precursor lipid phosphatidylglycerol. Plays a crucial role in crista junction formation and mitochondrial function.</text>
</comment>
<comment type="subunit">
    <text evidence="1">Component of the mitochondrial contact site and cristae organizing system (MICOS) complex, composed of at least MICOS10/MIC10, CHCHD3/MIC19, CHCHD6/MIC25, APOOL/MIC27, IMMT/MIC60, APOO/MIC23/MIC26 and MICOS13/MIC13. This complex was also known under the names MINOS or MitOS complex. The MICOS complex associates with mitochondrial outer membrane proteins SAMM50, MTX1 and MTX2 (together described as components of the mitochondrial outer membrane sorting assembly machinery (SAM) complex) and DNAJC11, mitochondrial inner membrane protein TMEM11 and with HSPA9. The MICOS and SAM complexes together with DNAJC11 are part of a large protein complex spanning both membranes termed the mitochondrial intermembrane space bridging (MIB) complex. Interacts with MICOS10/MIC10, IMMT/MIC60 and APOO/MIC23/MIC26.</text>
</comment>
<comment type="subcellular location">
    <subcellularLocation>
        <location evidence="1">Mitochondrion inner membrane</location>
        <topology evidence="1">Multi-pass membrane protein</topology>
    </subcellularLocation>
    <subcellularLocation>
        <location evidence="1">Mitochondrion</location>
    </subcellularLocation>
</comment>
<comment type="similarity">
    <text evidence="3">Belongs to the apolipoprotein O/MICOS complex subunit Mic27 family.</text>
</comment>